<gene>
    <name type="primary">sepA</name>
    <name type="ordered locus">SE_1758</name>
</gene>
<evidence type="ECO:0000250" key="1"/>
<evidence type="ECO:0000255" key="2"/>
<evidence type="ECO:0000305" key="3"/>
<feature type="chain" id="PRO_0000351495" description="Multidrug resistance efflux pump SepA">
    <location>
        <begin position="1"/>
        <end position="155"/>
    </location>
</feature>
<feature type="transmembrane region" description="Helical" evidence="2">
    <location>
        <begin position="15"/>
        <end position="35"/>
    </location>
</feature>
<feature type="transmembrane region" description="Helical" evidence="2">
    <location>
        <begin position="61"/>
        <end position="81"/>
    </location>
</feature>
<feature type="transmembrane region" description="Helical" evidence="2">
    <location>
        <begin position="98"/>
        <end position="118"/>
    </location>
</feature>
<feature type="transmembrane region" description="Helical" evidence="2">
    <location>
        <begin position="120"/>
        <end position="140"/>
    </location>
</feature>
<organism>
    <name type="scientific">Staphylococcus epidermidis (strain ATCC 12228 / FDA PCI 1200)</name>
    <dbReference type="NCBI Taxonomy" id="176280"/>
    <lineage>
        <taxon>Bacteria</taxon>
        <taxon>Bacillati</taxon>
        <taxon>Bacillota</taxon>
        <taxon>Bacilli</taxon>
        <taxon>Bacillales</taxon>
        <taxon>Staphylococcaceae</taxon>
        <taxon>Staphylococcus</taxon>
    </lineage>
</organism>
<keyword id="KW-1003">Cell membrane</keyword>
<keyword id="KW-0472">Membrane</keyword>
<keyword id="KW-0812">Transmembrane</keyword>
<keyword id="KW-1133">Transmembrane helix</keyword>
<keyword id="KW-0813">Transport</keyword>
<reference key="1">
    <citation type="journal article" date="2003" name="Mol. Microbiol.">
        <title>Genome-based analysis of virulence genes in a non-biofilm-forming Staphylococcus epidermidis strain (ATCC 12228).</title>
        <authorList>
            <person name="Zhang Y.-Q."/>
            <person name="Ren S.-X."/>
            <person name="Li H.-L."/>
            <person name="Wang Y.-X."/>
            <person name="Fu G."/>
            <person name="Yang J."/>
            <person name="Qin Z.-Q."/>
            <person name="Miao Y.-G."/>
            <person name="Wang W.-Y."/>
            <person name="Chen R.-S."/>
            <person name="Shen Y."/>
            <person name="Chen Z."/>
            <person name="Yuan Z.-H."/>
            <person name="Zhao G.-P."/>
            <person name="Qu D."/>
            <person name="Danchin A."/>
            <person name="Wen Y.-M."/>
        </authorList>
    </citation>
    <scope>NUCLEOTIDE SEQUENCE [LARGE SCALE GENOMIC DNA]</scope>
    <source>
        <strain>ATCC 12228 / FDA PCI 1200</strain>
    </source>
</reference>
<proteinExistence type="inferred from homology"/>
<protein>
    <recommendedName>
        <fullName>Multidrug resistance efflux pump SepA</fullName>
    </recommendedName>
    <alternativeName>
        <fullName>Antiseptic resistance protein SepA</fullName>
    </alternativeName>
    <alternativeName>
        <fullName>Staphylococcal efflux pump A</fullName>
    </alternativeName>
</protein>
<dbReference type="EMBL" id="AE015929">
    <property type="protein sequence ID" value="AAO05399.1"/>
    <property type="status" value="ALT_INIT"/>
    <property type="molecule type" value="Genomic_DNA"/>
</dbReference>
<dbReference type="RefSeq" id="NP_765313.1">
    <property type="nucleotide sequence ID" value="NC_004461.1"/>
</dbReference>
<dbReference type="RefSeq" id="WP_001829729.1">
    <property type="nucleotide sequence ID" value="NZ_WBME01000007.1"/>
</dbReference>
<dbReference type="KEGG" id="sep:SE_1758"/>
<dbReference type="PATRIC" id="fig|176280.10.peg.1716"/>
<dbReference type="eggNOG" id="ENOG5033YVE">
    <property type="taxonomic scope" value="Bacteria"/>
</dbReference>
<dbReference type="HOGENOM" id="CLU_151983_0_0_9"/>
<dbReference type="OrthoDB" id="2417783at2"/>
<dbReference type="Proteomes" id="UP000001411">
    <property type="component" value="Chromosome"/>
</dbReference>
<dbReference type="GO" id="GO:0005886">
    <property type="term" value="C:plasma membrane"/>
    <property type="evidence" value="ECO:0007669"/>
    <property type="project" value="UniProtKB-SubCell"/>
</dbReference>
<dbReference type="InterPro" id="IPR031396">
    <property type="entry name" value="SepA"/>
</dbReference>
<dbReference type="Pfam" id="PF17080">
    <property type="entry name" value="SepA"/>
    <property type="match status" value="1"/>
</dbReference>
<comment type="function">
    <text evidence="1">Involved in multidrug efflux.</text>
</comment>
<comment type="subcellular location">
    <subcellularLocation>
        <location evidence="3">Cell membrane</location>
        <topology evidence="3">Multi-pass membrane protein</topology>
    </subcellularLocation>
</comment>
<comment type="similarity">
    <text evidence="3">Belongs to the multidrug resistance efflux pump SepA family.</text>
</comment>
<comment type="sequence caution" evidence="3">
    <conflict type="erroneous initiation">
        <sequence resource="EMBL-CDS" id="AAO05399"/>
    </conflict>
</comment>
<sequence>MKFLKNKSYHLLVTLIVLTIFVISGAIFLTFLGFGLYGLSRILIYLHLGDFSYNKGFYDNLIYYGSYIVLGYFTLFSIEHLMDYFKKNLPKNPYFQGINFHLISYIVTTIMFYFIVHIHYVHVNIHFWVIMIIIGFLFVCKEVFYPESKNLNNKK</sequence>
<name>MDEP_STAES</name>
<accession>Q8CRK7</accession>